<dbReference type="EC" id="2.5.1.141" evidence="1"/>
<dbReference type="EMBL" id="BX897699">
    <property type="protein sequence ID" value="CAF27249.1"/>
    <property type="molecule type" value="Genomic_DNA"/>
</dbReference>
<dbReference type="SMR" id="Q6G4C6"/>
<dbReference type="PaxDb" id="283166-BH04400"/>
<dbReference type="EnsemblBacteria" id="CAF27249">
    <property type="protein sequence ID" value="CAF27249"/>
    <property type="gene ID" value="BH04400"/>
</dbReference>
<dbReference type="KEGG" id="bhe:BH04400"/>
<dbReference type="eggNOG" id="COG0109">
    <property type="taxonomic scope" value="Bacteria"/>
</dbReference>
<dbReference type="OrthoDB" id="9814417at2"/>
<dbReference type="UniPathway" id="UPA00834">
    <property type="reaction ID" value="UER00712"/>
</dbReference>
<dbReference type="Proteomes" id="UP000000421">
    <property type="component" value="Chromosome"/>
</dbReference>
<dbReference type="GO" id="GO:0005886">
    <property type="term" value="C:plasma membrane"/>
    <property type="evidence" value="ECO:0007669"/>
    <property type="project" value="UniProtKB-SubCell"/>
</dbReference>
<dbReference type="GO" id="GO:0008495">
    <property type="term" value="F:protoheme IX farnesyltransferase activity"/>
    <property type="evidence" value="ECO:0007669"/>
    <property type="project" value="UniProtKB-UniRule"/>
</dbReference>
<dbReference type="GO" id="GO:0048034">
    <property type="term" value="P:heme O biosynthetic process"/>
    <property type="evidence" value="ECO:0007669"/>
    <property type="project" value="UniProtKB-UniRule"/>
</dbReference>
<dbReference type="CDD" id="cd13957">
    <property type="entry name" value="PT_UbiA_Cox10"/>
    <property type="match status" value="1"/>
</dbReference>
<dbReference type="Gene3D" id="1.10.357.140">
    <property type="entry name" value="UbiA prenyltransferase"/>
    <property type="match status" value="1"/>
</dbReference>
<dbReference type="HAMAP" id="MF_00154">
    <property type="entry name" value="CyoE_CtaB"/>
    <property type="match status" value="1"/>
</dbReference>
<dbReference type="InterPro" id="IPR006369">
    <property type="entry name" value="Protohaem_IX_farnesylTrfase"/>
</dbReference>
<dbReference type="InterPro" id="IPR000537">
    <property type="entry name" value="UbiA_prenyltransferase"/>
</dbReference>
<dbReference type="InterPro" id="IPR030470">
    <property type="entry name" value="UbiA_prenylTrfase_CS"/>
</dbReference>
<dbReference type="InterPro" id="IPR044878">
    <property type="entry name" value="UbiA_sf"/>
</dbReference>
<dbReference type="NCBIfam" id="TIGR01473">
    <property type="entry name" value="cyoE_ctaB"/>
    <property type="match status" value="1"/>
</dbReference>
<dbReference type="NCBIfam" id="NF003349">
    <property type="entry name" value="PRK04375.1-2"/>
    <property type="match status" value="1"/>
</dbReference>
<dbReference type="PANTHER" id="PTHR43448:SF7">
    <property type="entry name" value="4-HYDROXYBENZOATE SOLANESYLTRANSFERASE"/>
    <property type="match status" value="1"/>
</dbReference>
<dbReference type="PANTHER" id="PTHR43448">
    <property type="entry name" value="PROTOHEME IX FARNESYLTRANSFERASE, MITOCHONDRIAL"/>
    <property type="match status" value="1"/>
</dbReference>
<dbReference type="Pfam" id="PF01040">
    <property type="entry name" value="UbiA"/>
    <property type="match status" value="1"/>
</dbReference>
<dbReference type="PROSITE" id="PS00943">
    <property type="entry name" value="UBIA"/>
    <property type="match status" value="1"/>
</dbReference>
<sequence length="312" mass="34581">MSIPRELSVASGSKSISPKPSVYDYITLLKPRVMLLVVFTALVGLIVSPVSINPLYGFLAILCIAVGGGGAGALNMWYDADIDAVMERTKSRPIPAGKISSRKAFIFGMVLSILSVLIMGSFVNWFAALFLAFTIFFYIVVYTIWLKRRTPQNIVIGGAAGAFPPMIGWAAATGTVNIESFLLFLIIFMWTPPHFWSLSLFSSLDYDAAGIPMMPNVRGEHSTKKQILFYTILMAICAAGPFIIGFAGVFYGIFSTVLSIIFIHFAYRLWKSNTYDATILMAKKTFFFSLFYLAAIFGILLIEFFVWCFIIL</sequence>
<comment type="function">
    <text evidence="1">Converts heme B (protoheme IX) to heme O by substitution of the vinyl group on carbon 2 of heme B porphyrin ring with a hydroxyethyl farnesyl side group.</text>
</comment>
<comment type="catalytic activity">
    <reaction evidence="1">
        <text>heme b + (2E,6E)-farnesyl diphosphate + H2O = Fe(II)-heme o + diphosphate</text>
        <dbReference type="Rhea" id="RHEA:28070"/>
        <dbReference type="ChEBI" id="CHEBI:15377"/>
        <dbReference type="ChEBI" id="CHEBI:33019"/>
        <dbReference type="ChEBI" id="CHEBI:60344"/>
        <dbReference type="ChEBI" id="CHEBI:60530"/>
        <dbReference type="ChEBI" id="CHEBI:175763"/>
        <dbReference type="EC" id="2.5.1.141"/>
    </reaction>
</comment>
<comment type="pathway">
    <text evidence="1">Porphyrin-containing compound metabolism; heme O biosynthesis; heme O from protoheme: step 1/1.</text>
</comment>
<comment type="subcellular location">
    <subcellularLocation>
        <location evidence="1">Cell inner membrane</location>
        <topology evidence="1">Multi-pass membrane protein</topology>
    </subcellularLocation>
</comment>
<comment type="miscellaneous">
    <text evidence="1">Carbon 2 of the heme B porphyrin ring is defined according to the Fischer nomenclature.</text>
</comment>
<comment type="similarity">
    <text evidence="1">Belongs to the UbiA prenyltransferase family. Protoheme IX farnesyltransferase subfamily.</text>
</comment>
<feature type="chain" id="PRO_0000327011" description="Protoheme IX farnesyltransferase">
    <location>
        <begin position="1"/>
        <end position="312"/>
    </location>
</feature>
<feature type="transmembrane region" description="Helical" evidence="1">
    <location>
        <begin position="33"/>
        <end position="53"/>
    </location>
</feature>
<feature type="transmembrane region" description="Helical" evidence="1">
    <location>
        <begin position="54"/>
        <end position="74"/>
    </location>
</feature>
<feature type="transmembrane region" description="Helical" evidence="1">
    <location>
        <begin position="105"/>
        <end position="125"/>
    </location>
</feature>
<feature type="transmembrane region" description="Helical" evidence="1">
    <location>
        <begin position="126"/>
        <end position="146"/>
    </location>
</feature>
<feature type="transmembrane region" description="Helical" evidence="1">
    <location>
        <begin position="154"/>
        <end position="174"/>
    </location>
</feature>
<feature type="transmembrane region" description="Helical" evidence="1">
    <location>
        <begin position="181"/>
        <end position="201"/>
    </location>
</feature>
<feature type="transmembrane region" description="Helical" evidence="1">
    <location>
        <begin position="243"/>
        <end position="263"/>
    </location>
</feature>
<feature type="transmembrane region" description="Helical" evidence="1">
    <location>
        <begin position="291"/>
        <end position="311"/>
    </location>
</feature>
<evidence type="ECO:0000255" key="1">
    <source>
        <dbReference type="HAMAP-Rule" id="MF_00154"/>
    </source>
</evidence>
<organism>
    <name type="scientific">Bartonella henselae (strain ATCC 49882 / DSM 28221 / CCUG 30454 / Houston 1)</name>
    <name type="common">Rochalimaea henselae</name>
    <dbReference type="NCBI Taxonomy" id="283166"/>
    <lineage>
        <taxon>Bacteria</taxon>
        <taxon>Pseudomonadati</taxon>
        <taxon>Pseudomonadota</taxon>
        <taxon>Alphaproteobacteria</taxon>
        <taxon>Hyphomicrobiales</taxon>
        <taxon>Bartonellaceae</taxon>
        <taxon>Bartonella</taxon>
    </lineage>
</organism>
<proteinExistence type="inferred from homology"/>
<protein>
    <recommendedName>
        <fullName evidence="1">Protoheme IX farnesyltransferase</fullName>
        <ecNumber evidence="1">2.5.1.141</ecNumber>
    </recommendedName>
    <alternativeName>
        <fullName evidence="1">Heme B farnesyltransferase</fullName>
    </alternativeName>
    <alternativeName>
        <fullName evidence="1">Heme O synthase</fullName>
    </alternativeName>
</protein>
<gene>
    <name evidence="1" type="primary">ctaB</name>
    <name type="ordered locus">BH04400</name>
</gene>
<keyword id="KW-0997">Cell inner membrane</keyword>
<keyword id="KW-1003">Cell membrane</keyword>
<keyword id="KW-0350">Heme biosynthesis</keyword>
<keyword id="KW-0472">Membrane</keyword>
<keyword id="KW-0808">Transferase</keyword>
<keyword id="KW-0812">Transmembrane</keyword>
<keyword id="KW-1133">Transmembrane helix</keyword>
<accession>Q6G4C6</accession>
<name>COXX_BARHE</name>
<reference key="1">
    <citation type="journal article" date="2004" name="Proc. Natl. Acad. Sci. U.S.A.">
        <title>The louse-borne human pathogen Bartonella quintana is a genomic derivative of the zoonotic agent Bartonella henselae.</title>
        <authorList>
            <person name="Alsmark U.C.M."/>
            <person name="Frank A.C."/>
            <person name="Karlberg E.O."/>
            <person name="Legault B.-A."/>
            <person name="Ardell D.H."/>
            <person name="Canbaeck B."/>
            <person name="Eriksson A.-S."/>
            <person name="Naeslund A.K."/>
            <person name="Handley S.A."/>
            <person name="Huvet M."/>
            <person name="La Scola B."/>
            <person name="Holmberg M."/>
            <person name="Andersson S.G.E."/>
        </authorList>
    </citation>
    <scope>NUCLEOTIDE SEQUENCE [LARGE SCALE GENOMIC DNA]</scope>
    <source>
        <strain>ATCC 49882 / DSM 28221 / CCUG 30454 / Houston 1</strain>
    </source>
</reference>